<sequence>MGPSNEHSSGHRNNFDLLRLFAACQVMFSHAWNWLHLGDPLNGTWVFDLLFSAPGVAIFFLISGFLVTDSYIRSSSAASFFVKRSLRIFPALFVNIAVMELALLVTGGLNVTGILQYLFYFTVYILTAARIWAVYFTYEPYTMSGFYGASDPSGVLWTLTVELTFYLTLPMLLEIWRRWKRAGALVVAVAALGSWVMAQHFNITDKYNPFLSVTAGPTFWIFSMGVLARLYWHRVSKIFEGKLLWWLATHLAITWWVAGTSAAFISINNAAPVDAFRIAVLAGLVLSAAHSLPRPNLLRRQDLSYGIYLYHMLVMHTLIAIGWVGHWWLWIVEPVGTVALAALSWALIEQPAMKLRTSLVARRLSVA</sequence>
<accession>P08888</accession>
<keyword id="KW-0012">Acyltransferase</keyword>
<keyword id="KW-1003">Cell membrane</keyword>
<keyword id="KW-0472">Membrane</keyword>
<keyword id="KW-0536">Nodulation</keyword>
<keyword id="KW-0614">Plasmid</keyword>
<keyword id="KW-0808">Transferase</keyword>
<keyword id="KW-0812">Transmembrane</keyword>
<keyword id="KW-1133">Transmembrane helix</keyword>
<comment type="function">
    <text>Not known. NodX allows Rhizobium leguminosarum biovar viciae strain TOM to nodulate Afghanistan peas.</text>
</comment>
<comment type="subcellular location">
    <subcellularLocation>
        <location evidence="2">Cell membrane</location>
        <topology evidence="2">Multi-pass membrane protein</topology>
    </subcellularLocation>
</comment>
<comment type="miscellaneous">
    <text>NodX probably forms part of a complex with membrane proteins specified by other genes in the nodABCIJX operon.</text>
</comment>
<comment type="similarity">
    <text evidence="2">Belongs to the acyltransferase 3 family.</text>
</comment>
<protein>
    <recommendedName>
        <fullName>Nodulation protein 10</fullName>
    </recommendedName>
    <alternativeName>
        <fullName>Nodulation protein X</fullName>
    </alternativeName>
    <alternativeName>
        <fullName>Probable sugar acetylase</fullName>
    </alternativeName>
</protein>
<reference key="1">
    <citation type="journal article" date="1988" name="Mol. Gen. Genet.">
        <title>Identification of nodX, a gene that allows Rhizobium leguminosarum biovar viciae strain TOM to nodulate Afghanistan peas.</title>
        <authorList>
            <person name="Davis E.O."/>
            <person name="Evans I.J."/>
            <person name="Johnston A.W.B."/>
        </authorList>
    </citation>
    <scope>NUCLEOTIDE SEQUENCE [GENOMIC DNA]</scope>
    <source>
        <strain>TOM</strain>
    </source>
</reference>
<name>NODX_RHILV</name>
<proteinExistence type="inferred from homology"/>
<gene>
    <name type="primary">nodX</name>
</gene>
<feature type="chain" id="PRO_0000208081" description="Nodulation protein 10">
    <location>
        <begin position="1"/>
        <end position="367"/>
    </location>
</feature>
<feature type="transmembrane region" description="Helical" evidence="1">
    <location>
        <begin position="15"/>
        <end position="37"/>
    </location>
</feature>
<feature type="transmembrane region" description="Helical" evidence="1">
    <location>
        <begin position="46"/>
        <end position="66"/>
    </location>
</feature>
<feature type="transmembrane region" description="Helical" evidence="1">
    <location>
        <begin position="88"/>
        <end position="108"/>
    </location>
</feature>
<feature type="transmembrane region" description="Helical" evidence="1">
    <location>
        <begin position="109"/>
        <end position="129"/>
    </location>
</feature>
<feature type="transmembrane region" description="Helical" evidence="1">
    <location>
        <begin position="155"/>
        <end position="175"/>
    </location>
</feature>
<feature type="transmembrane region" description="Helical" evidence="1">
    <location>
        <begin position="183"/>
        <end position="203"/>
    </location>
</feature>
<feature type="transmembrane region" description="Helical" evidence="1">
    <location>
        <begin position="208"/>
        <end position="228"/>
    </location>
</feature>
<feature type="transmembrane region" description="Helical" evidence="1">
    <location>
        <begin position="245"/>
        <end position="265"/>
    </location>
</feature>
<feature type="transmembrane region" description="Helical" evidence="1">
    <location>
        <begin position="270"/>
        <end position="290"/>
    </location>
</feature>
<feature type="transmembrane region" description="Helical" evidence="1">
    <location>
        <begin position="312"/>
        <end position="332"/>
    </location>
</feature>
<feature type="transmembrane region" description="Helical" evidence="1">
    <location>
        <begin position="335"/>
        <end position="355"/>
    </location>
</feature>
<dbReference type="EMBL" id="X07990">
    <property type="protein sequence ID" value="CAA30799.1"/>
    <property type="molecule type" value="Genomic_DNA"/>
</dbReference>
<dbReference type="PIR" id="S01431">
    <property type="entry name" value="S01431"/>
</dbReference>
<dbReference type="GO" id="GO:0005886">
    <property type="term" value="C:plasma membrane"/>
    <property type="evidence" value="ECO:0007669"/>
    <property type="project" value="UniProtKB-SubCell"/>
</dbReference>
<dbReference type="GO" id="GO:0016747">
    <property type="term" value="F:acyltransferase activity, transferring groups other than amino-acyl groups"/>
    <property type="evidence" value="ECO:0007669"/>
    <property type="project" value="InterPro"/>
</dbReference>
<dbReference type="GO" id="GO:0009103">
    <property type="term" value="P:lipopolysaccharide biosynthetic process"/>
    <property type="evidence" value="ECO:0007669"/>
    <property type="project" value="TreeGrafter"/>
</dbReference>
<dbReference type="InterPro" id="IPR002656">
    <property type="entry name" value="Acyl_transf_3_dom"/>
</dbReference>
<dbReference type="InterPro" id="IPR050879">
    <property type="entry name" value="Acyltransferase_3"/>
</dbReference>
<dbReference type="PANTHER" id="PTHR23028">
    <property type="entry name" value="ACETYLTRANSFERASE"/>
    <property type="match status" value="1"/>
</dbReference>
<dbReference type="PANTHER" id="PTHR23028:SF53">
    <property type="entry name" value="ACYL_TRANSF_3 DOMAIN-CONTAINING PROTEIN"/>
    <property type="match status" value="1"/>
</dbReference>
<dbReference type="Pfam" id="PF01757">
    <property type="entry name" value="Acyl_transf_3"/>
    <property type="match status" value="1"/>
</dbReference>
<evidence type="ECO:0000255" key="1"/>
<evidence type="ECO:0000305" key="2"/>
<geneLocation type="plasmid">
    <name>sym pRL5JI</name>
</geneLocation>
<organism>
    <name type="scientific">Rhizobium leguminosarum bv. viciae</name>
    <dbReference type="NCBI Taxonomy" id="387"/>
    <lineage>
        <taxon>Bacteria</taxon>
        <taxon>Pseudomonadati</taxon>
        <taxon>Pseudomonadota</taxon>
        <taxon>Alphaproteobacteria</taxon>
        <taxon>Hyphomicrobiales</taxon>
        <taxon>Rhizobiaceae</taxon>
        <taxon>Rhizobium/Agrobacterium group</taxon>
        <taxon>Rhizobium</taxon>
    </lineage>
</organism>